<dbReference type="EMBL" id="BC087678">
    <property type="protein sequence ID" value="AAH87678.1"/>
    <property type="molecule type" value="mRNA"/>
</dbReference>
<dbReference type="RefSeq" id="NP_001009683.1">
    <property type="nucleotide sequence ID" value="NM_001009683.2"/>
</dbReference>
<dbReference type="SMR" id="Q5M936"/>
<dbReference type="FunCoup" id="Q5M936">
    <property type="interactions" value="839"/>
</dbReference>
<dbReference type="STRING" id="10116.ENSRNOP00000005726"/>
<dbReference type="GlyCosmos" id="Q5M936">
    <property type="glycosylation" value="1 site, No reported glycans"/>
</dbReference>
<dbReference type="GlyGen" id="Q5M936">
    <property type="glycosylation" value="1 site"/>
</dbReference>
<dbReference type="PhosphoSitePlus" id="Q5M936"/>
<dbReference type="jPOST" id="Q5M936"/>
<dbReference type="PaxDb" id="10116-ENSRNOP00000005726"/>
<dbReference type="Ensembl" id="ENSRNOT00000005726.5">
    <property type="protein sequence ID" value="ENSRNOP00000005726.3"/>
    <property type="gene ID" value="ENSRNOG00000004307.7"/>
</dbReference>
<dbReference type="GeneID" id="304884"/>
<dbReference type="KEGG" id="rno:304884"/>
<dbReference type="UCSC" id="RGD:1310101">
    <property type="organism name" value="rat"/>
</dbReference>
<dbReference type="AGR" id="RGD:1310101"/>
<dbReference type="CTD" id="64222"/>
<dbReference type="RGD" id="1310101">
    <property type="gene designation" value="Tor3a"/>
</dbReference>
<dbReference type="eggNOG" id="KOG2170">
    <property type="taxonomic scope" value="Eukaryota"/>
</dbReference>
<dbReference type="GeneTree" id="ENSGT00950000182888"/>
<dbReference type="HOGENOM" id="CLU_053537_0_0_1"/>
<dbReference type="InParanoid" id="Q5M936"/>
<dbReference type="OMA" id="FYCNIWE"/>
<dbReference type="OrthoDB" id="19623at2759"/>
<dbReference type="PhylomeDB" id="Q5M936"/>
<dbReference type="TreeFam" id="TF314941"/>
<dbReference type="PRO" id="PR:Q5M936"/>
<dbReference type="Proteomes" id="UP000002494">
    <property type="component" value="Chromosome 13"/>
</dbReference>
<dbReference type="Bgee" id="ENSRNOG00000004307">
    <property type="expression patterns" value="Expressed in quadriceps femoris and 19 other cell types or tissues"/>
</dbReference>
<dbReference type="GO" id="GO:0005783">
    <property type="term" value="C:endoplasmic reticulum"/>
    <property type="evidence" value="ECO:0000266"/>
    <property type="project" value="RGD"/>
</dbReference>
<dbReference type="GO" id="GO:0005788">
    <property type="term" value="C:endoplasmic reticulum lumen"/>
    <property type="evidence" value="ECO:0000266"/>
    <property type="project" value="RGD"/>
</dbReference>
<dbReference type="GO" id="GO:0005635">
    <property type="term" value="C:nuclear envelope"/>
    <property type="evidence" value="ECO:0000318"/>
    <property type="project" value="GO_Central"/>
</dbReference>
<dbReference type="GO" id="GO:0005524">
    <property type="term" value="F:ATP binding"/>
    <property type="evidence" value="ECO:0007669"/>
    <property type="project" value="UniProtKB-KW"/>
</dbReference>
<dbReference type="GO" id="GO:0016887">
    <property type="term" value="F:ATP hydrolysis activity"/>
    <property type="evidence" value="ECO:0000250"/>
    <property type="project" value="UniProtKB"/>
</dbReference>
<dbReference type="FunFam" id="3.40.50.300:FF:001211">
    <property type="entry name" value="Torsin family 3 member A"/>
    <property type="match status" value="1"/>
</dbReference>
<dbReference type="Gene3D" id="3.40.50.300">
    <property type="entry name" value="P-loop containing nucleotide triphosphate hydrolases"/>
    <property type="match status" value="1"/>
</dbReference>
<dbReference type="InterPro" id="IPR001270">
    <property type="entry name" value="ClpA/B"/>
</dbReference>
<dbReference type="InterPro" id="IPR027417">
    <property type="entry name" value="P-loop_NTPase"/>
</dbReference>
<dbReference type="InterPro" id="IPR049337">
    <property type="entry name" value="TOR1A_C"/>
</dbReference>
<dbReference type="InterPro" id="IPR010448">
    <property type="entry name" value="Torsin"/>
</dbReference>
<dbReference type="PANTHER" id="PTHR10760">
    <property type="entry name" value="TORSIN"/>
    <property type="match status" value="1"/>
</dbReference>
<dbReference type="PANTHER" id="PTHR10760:SF3">
    <property type="entry name" value="TORSIN-3A"/>
    <property type="match status" value="1"/>
</dbReference>
<dbReference type="Pfam" id="PF21376">
    <property type="entry name" value="TOR1A_C"/>
    <property type="match status" value="1"/>
</dbReference>
<dbReference type="Pfam" id="PF06309">
    <property type="entry name" value="Torsin"/>
    <property type="match status" value="1"/>
</dbReference>
<dbReference type="PRINTS" id="PR00300">
    <property type="entry name" value="CLPPROTEASEA"/>
</dbReference>
<dbReference type="SUPFAM" id="SSF52540">
    <property type="entry name" value="P-loop containing nucleoside triphosphate hydrolases"/>
    <property type="match status" value="1"/>
</dbReference>
<accession>Q5M936</accession>
<name>TOR3A_RAT</name>
<feature type="signal peptide" evidence="2">
    <location>
        <begin position="1"/>
        <end position="24"/>
    </location>
</feature>
<feature type="chain" id="PRO_0000228149" description="Torsin-3A">
    <location>
        <begin position="25"/>
        <end position="395"/>
    </location>
</feature>
<feature type="binding site" evidence="2">
    <location>
        <begin position="165"/>
        <end position="172"/>
    </location>
    <ligand>
        <name>ATP</name>
        <dbReference type="ChEBI" id="CHEBI:30616"/>
    </ligand>
</feature>
<feature type="glycosylation site" description="N-linked (GlcNAc...) asparagine" evidence="2">
    <location>
        <position position="120"/>
    </location>
</feature>
<proteinExistence type="evidence at transcript level"/>
<keyword id="KW-0067">ATP-binding</keyword>
<keyword id="KW-0963">Cytoplasm</keyword>
<keyword id="KW-0256">Endoplasmic reticulum</keyword>
<keyword id="KW-0325">Glycoprotein</keyword>
<keyword id="KW-0547">Nucleotide-binding</keyword>
<keyword id="KW-1185">Reference proteome</keyword>
<keyword id="KW-0732">Signal</keyword>
<sequence length="395" mass="45166">MFFGAFWLLLLLLLPPLRPPGAQGHRGAKSPEQEADEPIPWPSIQRLREQLRTAGTLSKRYWALFSCTLWPDHCEDQETPVPPLGWSLPLWGRRSLDMLTSWFCRFQDCCSAGNCRISNNFTGLESDLRVRLHGQHLASKLVLEAVKGYLEMPQVGKALALSFHGWSGTGKNFVARMLVDNLYRDGMRSDCVKMFISTFHFPHPKYVDLYKEDLQRQMQETQRRCQQSTFVFDEAEKLHPGLLELLEPYLEPRSPETHGAELPRAIFLLLSNLGGSVINEVVLGLLKAGWSREEITLQHLEMPLQAEIIKSADSSFGSSRLLKKHLIDLFIPFLPLEYRHVRLCVRDAFLGQDLPYTEEALDEIAKMMTYVPEEEQLFSSQGCKSISQRINLVLP</sequence>
<comment type="subunit">
    <text evidence="1">May not form homohexamers.</text>
</comment>
<comment type="subcellular location">
    <subcellularLocation>
        <location>Cytoplasm</location>
    </subcellularLocation>
    <subcellularLocation>
        <location evidence="1">Endoplasmic reticulum lumen</location>
    </subcellularLocation>
</comment>
<comment type="PTM">
    <text evidence="1">N-glycosylated.</text>
</comment>
<comment type="similarity">
    <text evidence="3">Belongs to the ClpA/ClpB family. Torsin subfamily.</text>
</comment>
<protein>
    <recommendedName>
        <fullName>Torsin-3A</fullName>
    </recommendedName>
    <alternativeName>
        <fullName>Torsin family 3 member A</fullName>
    </alternativeName>
</protein>
<organism>
    <name type="scientific">Rattus norvegicus</name>
    <name type="common">Rat</name>
    <dbReference type="NCBI Taxonomy" id="10116"/>
    <lineage>
        <taxon>Eukaryota</taxon>
        <taxon>Metazoa</taxon>
        <taxon>Chordata</taxon>
        <taxon>Craniata</taxon>
        <taxon>Vertebrata</taxon>
        <taxon>Euteleostomi</taxon>
        <taxon>Mammalia</taxon>
        <taxon>Eutheria</taxon>
        <taxon>Euarchontoglires</taxon>
        <taxon>Glires</taxon>
        <taxon>Rodentia</taxon>
        <taxon>Myomorpha</taxon>
        <taxon>Muroidea</taxon>
        <taxon>Muridae</taxon>
        <taxon>Murinae</taxon>
        <taxon>Rattus</taxon>
    </lineage>
</organism>
<evidence type="ECO:0000250" key="1"/>
<evidence type="ECO:0000255" key="2"/>
<evidence type="ECO:0000305" key="3"/>
<reference key="1">
    <citation type="journal article" date="2004" name="Genome Res.">
        <title>The status, quality, and expansion of the NIH full-length cDNA project: the Mammalian Gene Collection (MGC).</title>
        <authorList>
            <consortium name="The MGC Project Team"/>
        </authorList>
    </citation>
    <scope>NUCLEOTIDE SEQUENCE [LARGE SCALE MRNA]</scope>
    <source>
        <tissue>Brain</tissue>
    </source>
</reference>
<gene>
    <name type="primary">Tor3a</name>
</gene>